<keyword id="KW-0687">Ribonucleoprotein</keyword>
<keyword id="KW-0689">Ribosomal protein</keyword>
<protein>
    <recommendedName>
        <fullName evidence="1">Large ribosomal subunit protein bL28</fullName>
    </recommendedName>
    <alternativeName>
        <fullName evidence="2">50S ribosomal protein L28</fullName>
    </alternativeName>
</protein>
<gene>
    <name evidence="1" type="primary">rpmB</name>
    <name type="ordered locus">SSU05_0340</name>
</gene>
<evidence type="ECO:0000255" key="1">
    <source>
        <dbReference type="HAMAP-Rule" id="MF_00373"/>
    </source>
</evidence>
<evidence type="ECO:0000305" key="2"/>
<comment type="similarity">
    <text evidence="1">Belongs to the bacterial ribosomal protein bL28 family.</text>
</comment>
<reference key="1">
    <citation type="journal article" date="2007" name="PLoS ONE">
        <title>A glimpse of streptococcal toxic shock syndrome from comparative genomics of S. suis 2 Chinese isolates.</title>
        <authorList>
            <person name="Chen C."/>
            <person name="Tang J."/>
            <person name="Dong W."/>
            <person name="Wang C."/>
            <person name="Feng Y."/>
            <person name="Wang J."/>
            <person name="Zheng F."/>
            <person name="Pan X."/>
            <person name="Liu D."/>
            <person name="Li M."/>
            <person name="Song Y."/>
            <person name="Zhu X."/>
            <person name="Sun H."/>
            <person name="Feng T."/>
            <person name="Guo Z."/>
            <person name="Ju A."/>
            <person name="Ge J."/>
            <person name="Dong Y."/>
            <person name="Sun W."/>
            <person name="Jiang Y."/>
            <person name="Wang J."/>
            <person name="Yan J."/>
            <person name="Yang H."/>
            <person name="Wang X."/>
            <person name="Gao G.F."/>
            <person name="Yang R."/>
            <person name="Wang J."/>
            <person name="Yu J."/>
        </authorList>
    </citation>
    <scope>NUCLEOTIDE SEQUENCE [LARGE SCALE GENOMIC DNA]</scope>
    <source>
        <strain>05ZYH33</strain>
    </source>
</reference>
<organism>
    <name type="scientific">Streptococcus suis (strain 05ZYH33)</name>
    <dbReference type="NCBI Taxonomy" id="391295"/>
    <lineage>
        <taxon>Bacteria</taxon>
        <taxon>Bacillati</taxon>
        <taxon>Bacillota</taxon>
        <taxon>Bacilli</taxon>
        <taxon>Lactobacillales</taxon>
        <taxon>Streptococcaceae</taxon>
        <taxon>Streptococcus</taxon>
    </lineage>
</organism>
<sequence>MAKVCYFTGRKTVSGNNRSHAMNQTKRAVKPNLQKVTVLIDGKPKKVWASARALKSGKVERV</sequence>
<accession>A4VT69</accession>
<name>RL28_STRSY</name>
<feature type="chain" id="PRO_1000007378" description="Large ribosomal subunit protein bL28">
    <location>
        <begin position="1"/>
        <end position="62"/>
    </location>
</feature>
<dbReference type="EMBL" id="CP000407">
    <property type="protein sequence ID" value="ABP89308.1"/>
    <property type="molecule type" value="Genomic_DNA"/>
</dbReference>
<dbReference type="SMR" id="A4VT69"/>
<dbReference type="STRING" id="391295.SSU05_0340"/>
<dbReference type="KEGG" id="ssu:SSU05_0340"/>
<dbReference type="eggNOG" id="COG0227">
    <property type="taxonomic scope" value="Bacteria"/>
</dbReference>
<dbReference type="HOGENOM" id="CLU_064548_7_1_9"/>
<dbReference type="GO" id="GO:1990904">
    <property type="term" value="C:ribonucleoprotein complex"/>
    <property type="evidence" value="ECO:0007669"/>
    <property type="project" value="UniProtKB-KW"/>
</dbReference>
<dbReference type="GO" id="GO:0005840">
    <property type="term" value="C:ribosome"/>
    <property type="evidence" value="ECO:0007669"/>
    <property type="project" value="UniProtKB-KW"/>
</dbReference>
<dbReference type="GO" id="GO:0003735">
    <property type="term" value="F:structural constituent of ribosome"/>
    <property type="evidence" value="ECO:0007669"/>
    <property type="project" value="InterPro"/>
</dbReference>
<dbReference type="GO" id="GO:0006412">
    <property type="term" value="P:translation"/>
    <property type="evidence" value="ECO:0007669"/>
    <property type="project" value="UniProtKB-UniRule"/>
</dbReference>
<dbReference type="Gene3D" id="2.30.170.40">
    <property type="entry name" value="Ribosomal protein L28/L24"/>
    <property type="match status" value="1"/>
</dbReference>
<dbReference type="HAMAP" id="MF_00373">
    <property type="entry name" value="Ribosomal_bL28"/>
    <property type="match status" value="1"/>
</dbReference>
<dbReference type="InterPro" id="IPR050096">
    <property type="entry name" value="Bacterial_rp_bL28"/>
</dbReference>
<dbReference type="InterPro" id="IPR026569">
    <property type="entry name" value="Ribosomal_bL28"/>
</dbReference>
<dbReference type="InterPro" id="IPR034704">
    <property type="entry name" value="Ribosomal_bL28/bL31-like_sf"/>
</dbReference>
<dbReference type="InterPro" id="IPR001383">
    <property type="entry name" value="Ribosomal_bL28_bact-type"/>
</dbReference>
<dbReference type="InterPro" id="IPR037147">
    <property type="entry name" value="Ribosomal_bL28_sf"/>
</dbReference>
<dbReference type="NCBIfam" id="TIGR00009">
    <property type="entry name" value="L28"/>
    <property type="match status" value="1"/>
</dbReference>
<dbReference type="PANTHER" id="PTHR39080">
    <property type="entry name" value="50S RIBOSOMAL PROTEIN L28"/>
    <property type="match status" value="1"/>
</dbReference>
<dbReference type="PANTHER" id="PTHR39080:SF1">
    <property type="entry name" value="LARGE RIBOSOMAL SUBUNIT PROTEIN BL28A"/>
    <property type="match status" value="1"/>
</dbReference>
<dbReference type="Pfam" id="PF00830">
    <property type="entry name" value="Ribosomal_L28"/>
    <property type="match status" value="1"/>
</dbReference>
<dbReference type="SUPFAM" id="SSF143800">
    <property type="entry name" value="L28p-like"/>
    <property type="match status" value="1"/>
</dbReference>
<proteinExistence type="inferred from homology"/>